<organism>
    <name type="scientific">Stenotrophomonas maltophilia (strain K279a)</name>
    <dbReference type="NCBI Taxonomy" id="522373"/>
    <lineage>
        <taxon>Bacteria</taxon>
        <taxon>Pseudomonadati</taxon>
        <taxon>Pseudomonadota</taxon>
        <taxon>Gammaproteobacteria</taxon>
        <taxon>Lysobacterales</taxon>
        <taxon>Lysobacteraceae</taxon>
        <taxon>Stenotrophomonas</taxon>
        <taxon>Stenotrophomonas maltophilia group</taxon>
    </lineage>
</organism>
<evidence type="ECO:0000255" key="1">
    <source>
        <dbReference type="HAMAP-Rule" id="MF_00480"/>
    </source>
</evidence>
<evidence type="ECO:0000305" key="2"/>
<gene>
    <name evidence="1" type="primary">rpsG</name>
    <name type="ordered locus">Smlt0902</name>
</gene>
<accession>B2FQ41</accession>
<sequence>MSRKGNTPQRSVLPDPKHGSETIARFINMVMQSGKKSVAEKIVYGAMDVITEKNSSANAIELVQKALDNVAPAVEVKSRRVGGATYQVPVEVRSSRKMALAMRWLIDSARKRGENTMPKKLAAELIDASENRGGAIKKREETHRMAEANKAFAHYRW</sequence>
<name>RS7_STRMK</name>
<keyword id="KW-1185">Reference proteome</keyword>
<keyword id="KW-0687">Ribonucleoprotein</keyword>
<keyword id="KW-0689">Ribosomal protein</keyword>
<keyword id="KW-0694">RNA-binding</keyword>
<keyword id="KW-0699">rRNA-binding</keyword>
<keyword id="KW-0820">tRNA-binding</keyword>
<reference key="1">
    <citation type="journal article" date="2008" name="Genome Biol.">
        <title>The complete genome, comparative and functional analysis of Stenotrophomonas maltophilia reveals an organism heavily shielded by drug resistance determinants.</title>
        <authorList>
            <person name="Crossman L.C."/>
            <person name="Gould V.C."/>
            <person name="Dow J.M."/>
            <person name="Vernikos G.S."/>
            <person name="Okazaki A."/>
            <person name="Sebaihia M."/>
            <person name="Saunders D."/>
            <person name="Arrowsmith C."/>
            <person name="Carver T."/>
            <person name="Peters N."/>
            <person name="Adlem E."/>
            <person name="Kerhornou A."/>
            <person name="Lord A."/>
            <person name="Murphy L."/>
            <person name="Seeger K."/>
            <person name="Squares R."/>
            <person name="Rutter S."/>
            <person name="Quail M.A."/>
            <person name="Rajandream M.A."/>
            <person name="Harris D."/>
            <person name="Churcher C."/>
            <person name="Bentley S.D."/>
            <person name="Parkhill J."/>
            <person name="Thomson N.R."/>
            <person name="Avison M.B."/>
        </authorList>
    </citation>
    <scope>NUCLEOTIDE SEQUENCE [LARGE SCALE GENOMIC DNA]</scope>
    <source>
        <strain>K279a</strain>
    </source>
</reference>
<feature type="chain" id="PRO_1000126007" description="Small ribosomal subunit protein uS7">
    <location>
        <begin position="1"/>
        <end position="157"/>
    </location>
</feature>
<comment type="function">
    <text evidence="1">One of the primary rRNA binding proteins, it binds directly to 16S rRNA where it nucleates assembly of the head domain of the 30S subunit. Is located at the subunit interface close to the decoding center, probably blocks exit of the E-site tRNA.</text>
</comment>
<comment type="subunit">
    <text evidence="1">Part of the 30S ribosomal subunit. Contacts proteins S9 and S11.</text>
</comment>
<comment type="similarity">
    <text evidence="1">Belongs to the universal ribosomal protein uS7 family.</text>
</comment>
<dbReference type="EMBL" id="AM743169">
    <property type="protein sequence ID" value="CAQ44471.1"/>
    <property type="molecule type" value="Genomic_DNA"/>
</dbReference>
<dbReference type="RefSeq" id="WP_004145321.1">
    <property type="nucleotide sequence ID" value="NC_010943.1"/>
</dbReference>
<dbReference type="SMR" id="B2FQ41"/>
<dbReference type="EnsemblBacteria" id="CAQ44471">
    <property type="protein sequence ID" value="CAQ44471"/>
    <property type="gene ID" value="Smlt0902"/>
</dbReference>
<dbReference type="GeneID" id="97259930"/>
<dbReference type="KEGG" id="sml:Smlt0902"/>
<dbReference type="eggNOG" id="COG0049">
    <property type="taxonomic scope" value="Bacteria"/>
</dbReference>
<dbReference type="HOGENOM" id="CLU_072226_1_1_6"/>
<dbReference type="Proteomes" id="UP000008840">
    <property type="component" value="Chromosome"/>
</dbReference>
<dbReference type="GO" id="GO:0015935">
    <property type="term" value="C:small ribosomal subunit"/>
    <property type="evidence" value="ECO:0007669"/>
    <property type="project" value="InterPro"/>
</dbReference>
<dbReference type="GO" id="GO:0019843">
    <property type="term" value="F:rRNA binding"/>
    <property type="evidence" value="ECO:0007669"/>
    <property type="project" value="UniProtKB-UniRule"/>
</dbReference>
<dbReference type="GO" id="GO:0003735">
    <property type="term" value="F:structural constituent of ribosome"/>
    <property type="evidence" value="ECO:0007669"/>
    <property type="project" value="InterPro"/>
</dbReference>
<dbReference type="GO" id="GO:0000049">
    <property type="term" value="F:tRNA binding"/>
    <property type="evidence" value="ECO:0007669"/>
    <property type="project" value="UniProtKB-UniRule"/>
</dbReference>
<dbReference type="GO" id="GO:0006412">
    <property type="term" value="P:translation"/>
    <property type="evidence" value="ECO:0007669"/>
    <property type="project" value="UniProtKB-UniRule"/>
</dbReference>
<dbReference type="CDD" id="cd14869">
    <property type="entry name" value="uS7_Bacteria"/>
    <property type="match status" value="1"/>
</dbReference>
<dbReference type="FunFam" id="1.10.455.10:FF:000001">
    <property type="entry name" value="30S ribosomal protein S7"/>
    <property type="match status" value="1"/>
</dbReference>
<dbReference type="Gene3D" id="1.10.455.10">
    <property type="entry name" value="Ribosomal protein S7 domain"/>
    <property type="match status" value="1"/>
</dbReference>
<dbReference type="HAMAP" id="MF_00480_B">
    <property type="entry name" value="Ribosomal_uS7_B"/>
    <property type="match status" value="1"/>
</dbReference>
<dbReference type="InterPro" id="IPR000235">
    <property type="entry name" value="Ribosomal_uS7"/>
</dbReference>
<dbReference type="InterPro" id="IPR005717">
    <property type="entry name" value="Ribosomal_uS7_bac/org-type"/>
</dbReference>
<dbReference type="InterPro" id="IPR020606">
    <property type="entry name" value="Ribosomal_uS7_CS"/>
</dbReference>
<dbReference type="InterPro" id="IPR023798">
    <property type="entry name" value="Ribosomal_uS7_dom"/>
</dbReference>
<dbReference type="InterPro" id="IPR036823">
    <property type="entry name" value="Ribosomal_uS7_dom_sf"/>
</dbReference>
<dbReference type="NCBIfam" id="TIGR01029">
    <property type="entry name" value="rpsG_bact"/>
    <property type="match status" value="1"/>
</dbReference>
<dbReference type="PANTHER" id="PTHR11205">
    <property type="entry name" value="RIBOSOMAL PROTEIN S7"/>
    <property type="match status" value="1"/>
</dbReference>
<dbReference type="Pfam" id="PF00177">
    <property type="entry name" value="Ribosomal_S7"/>
    <property type="match status" value="1"/>
</dbReference>
<dbReference type="PIRSF" id="PIRSF002122">
    <property type="entry name" value="RPS7p_RPS7a_RPS5e_RPS7o"/>
    <property type="match status" value="1"/>
</dbReference>
<dbReference type="SUPFAM" id="SSF47973">
    <property type="entry name" value="Ribosomal protein S7"/>
    <property type="match status" value="1"/>
</dbReference>
<dbReference type="PROSITE" id="PS00052">
    <property type="entry name" value="RIBOSOMAL_S7"/>
    <property type="match status" value="1"/>
</dbReference>
<proteinExistence type="inferred from homology"/>
<protein>
    <recommendedName>
        <fullName evidence="1">Small ribosomal subunit protein uS7</fullName>
    </recommendedName>
    <alternativeName>
        <fullName evidence="2">30S ribosomal protein S7</fullName>
    </alternativeName>
</protein>